<reference key="1">
    <citation type="submission" date="1994-03" db="EMBL/GenBank/DDBJ databases">
        <authorList>
            <person name="Smith D.R."/>
            <person name="Robison K."/>
        </authorList>
    </citation>
    <scope>NUCLEOTIDE SEQUENCE [GENOMIC DNA]</scope>
</reference>
<reference key="2">
    <citation type="journal article" date="2001" name="Nature">
        <title>Massive gene decay in the leprosy bacillus.</title>
        <authorList>
            <person name="Cole S.T."/>
            <person name="Eiglmeier K."/>
            <person name="Parkhill J."/>
            <person name="James K.D."/>
            <person name="Thomson N.R."/>
            <person name="Wheeler P.R."/>
            <person name="Honore N."/>
            <person name="Garnier T."/>
            <person name="Churcher C.M."/>
            <person name="Harris D.E."/>
            <person name="Mungall K.L."/>
            <person name="Basham D."/>
            <person name="Brown D."/>
            <person name="Chillingworth T."/>
            <person name="Connor R."/>
            <person name="Davies R.M."/>
            <person name="Devlin K."/>
            <person name="Duthoy S."/>
            <person name="Feltwell T."/>
            <person name="Fraser A."/>
            <person name="Hamlin N."/>
            <person name="Holroyd S."/>
            <person name="Hornsby T."/>
            <person name="Jagels K."/>
            <person name="Lacroix C."/>
            <person name="Maclean J."/>
            <person name="Moule S."/>
            <person name="Murphy L.D."/>
            <person name="Oliver K."/>
            <person name="Quail M.A."/>
            <person name="Rajandream M.A."/>
            <person name="Rutherford K.M."/>
            <person name="Rutter S."/>
            <person name="Seeger K."/>
            <person name="Simon S."/>
            <person name="Simmonds M."/>
            <person name="Skelton J."/>
            <person name="Squares R."/>
            <person name="Squares S."/>
            <person name="Stevens K."/>
            <person name="Taylor K."/>
            <person name="Whitehead S."/>
            <person name="Woodward J.R."/>
            <person name="Barrell B.G."/>
        </authorList>
    </citation>
    <scope>NUCLEOTIDE SEQUENCE [LARGE SCALE GENOMIC DNA]</scope>
    <source>
        <strain>TN</strain>
    </source>
</reference>
<keyword id="KW-0129">CBS domain</keyword>
<keyword id="KW-0332">GMP biosynthesis</keyword>
<keyword id="KW-0479">Metal-binding</keyword>
<keyword id="KW-0520">NAD</keyword>
<keyword id="KW-0560">Oxidoreductase</keyword>
<keyword id="KW-0630">Potassium</keyword>
<keyword id="KW-0658">Purine biosynthesis</keyword>
<keyword id="KW-1185">Reference proteome</keyword>
<keyword id="KW-0677">Repeat</keyword>
<evidence type="ECO:0000255" key="1">
    <source>
        <dbReference type="HAMAP-Rule" id="MF_01964"/>
    </source>
</evidence>
<name>IMDH_MYCLE</name>
<sequence length="529" mass="54814">MIRGMSNLKESSDFVASSYVRLGGLMDDPAATGGDNPHKVAMLGLTFDDVLLLPAASDVVPATADISSQLTKKIRLKVPLVSSAMDTVTEARMAIAMARAGGMGVLHRNLPVGEQAGQVETVKRSEAGMVTDPVTCRPDNTLAQVGALCARFRISGLPVVDDSGALAGIITNRDMRFEVDQSKQVAEVMTKTPLITAAEGVSADAALGLLRRNKIEKLPVVDGHGRLTGLITVKDFVKTEQHPLATKDNDGRLLVGAAVGVGGDAWVRAMMLVDAGVDVLIVDTAHAHNRLVLDMVGKLKVEIGDRVQVIGGNVATRSAAAALVEAGADAVKVGVGPGSTCTTRVVAGVGAPQITAILEAVAACGPAGVPVIADGGLQYSGDIAKALAAGASTTMLGSLLAGTAEAPGELIFVNGKQFKSYRGMGSLGAMQGRGGDKSYSKDRYFADDALSEDKLVPEGIEGRVPFRGPLSSVIHQLVGGLRAAMGYTGSPTIEVLQQAQFVRITPAGLKESHPHDVAMTVEAPNYYPR</sequence>
<accession>Q49729</accession>
<gene>
    <name evidence="1" type="primary">guaB</name>
    <name type="ordered locus">ML0387</name>
    <name type="ORF">B1620_C3_238</name>
</gene>
<proteinExistence type="inferred from homology"/>
<protein>
    <recommendedName>
        <fullName evidence="1">Inosine-5'-monophosphate dehydrogenase</fullName>
        <shortName evidence="1">IMP dehydrogenase</shortName>
        <shortName evidence="1">IMPD</shortName>
        <shortName evidence="1">IMPDH</shortName>
        <ecNumber evidence="1">1.1.1.205</ecNumber>
    </recommendedName>
</protein>
<organism>
    <name type="scientific">Mycobacterium leprae (strain TN)</name>
    <dbReference type="NCBI Taxonomy" id="272631"/>
    <lineage>
        <taxon>Bacteria</taxon>
        <taxon>Bacillati</taxon>
        <taxon>Actinomycetota</taxon>
        <taxon>Actinomycetes</taxon>
        <taxon>Mycobacteriales</taxon>
        <taxon>Mycobacteriaceae</taxon>
        <taxon>Mycobacterium</taxon>
    </lineage>
</organism>
<dbReference type="EC" id="1.1.1.205" evidence="1"/>
<dbReference type="EMBL" id="U00015">
    <property type="protein sequence ID" value="AAC43232.1"/>
    <property type="molecule type" value="Genomic_DNA"/>
</dbReference>
<dbReference type="EMBL" id="AL583918">
    <property type="protein sequence ID" value="CAC29895.1"/>
    <property type="molecule type" value="Genomic_DNA"/>
</dbReference>
<dbReference type="PIR" id="S72823">
    <property type="entry name" value="S72823"/>
</dbReference>
<dbReference type="RefSeq" id="NP_301377.1">
    <property type="nucleotide sequence ID" value="NC_002677.1"/>
</dbReference>
<dbReference type="RefSeq" id="WP_010907701.1">
    <property type="nucleotide sequence ID" value="NC_002677.1"/>
</dbReference>
<dbReference type="SMR" id="Q49729"/>
<dbReference type="STRING" id="272631.gene:17574206"/>
<dbReference type="KEGG" id="mle:ML0387"/>
<dbReference type="PATRIC" id="fig|272631.5.peg.653"/>
<dbReference type="Leproma" id="ML0387"/>
<dbReference type="eggNOG" id="COG0516">
    <property type="taxonomic scope" value="Bacteria"/>
</dbReference>
<dbReference type="eggNOG" id="COG0517">
    <property type="taxonomic scope" value="Bacteria"/>
</dbReference>
<dbReference type="HOGENOM" id="CLU_022552_2_1_11"/>
<dbReference type="OrthoDB" id="9805398at2"/>
<dbReference type="UniPathway" id="UPA00601">
    <property type="reaction ID" value="UER00295"/>
</dbReference>
<dbReference type="Proteomes" id="UP000000806">
    <property type="component" value="Chromosome"/>
</dbReference>
<dbReference type="GO" id="GO:0003938">
    <property type="term" value="F:IMP dehydrogenase activity"/>
    <property type="evidence" value="ECO:0007669"/>
    <property type="project" value="UniProtKB-UniRule"/>
</dbReference>
<dbReference type="GO" id="GO:0046872">
    <property type="term" value="F:metal ion binding"/>
    <property type="evidence" value="ECO:0007669"/>
    <property type="project" value="UniProtKB-UniRule"/>
</dbReference>
<dbReference type="GO" id="GO:0000166">
    <property type="term" value="F:nucleotide binding"/>
    <property type="evidence" value="ECO:0007669"/>
    <property type="project" value="UniProtKB-UniRule"/>
</dbReference>
<dbReference type="GO" id="GO:0006177">
    <property type="term" value="P:GMP biosynthetic process"/>
    <property type="evidence" value="ECO:0007669"/>
    <property type="project" value="UniProtKB-UniRule"/>
</dbReference>
<dbReference type="GO" id="GO:0006183">
    <property type="term" value="P:GTP biosynthetic process"/>
    <property type="evidence" value="ECO:0007669"/>
    <property type="project" value="TreeGrafter"/>
</dbReference>
<dbReference type="CDD" id="cd04601">
    <property type="entry name" value="CBS_pair_IMPDH"/>
    <property type="match status" value="1"/>
</dbReference>
<dbReference type="CDD" id="cd00381">
    <property type="entry name" value="IMPDH"/>
    <property type="match status" value="1"/>
</dbReference>
<dbReference type="FunFam" id="3.20.20.70:FF:000003">
    <property type="entry name" value="GMP reductase"/>
    <property type="match status" value="1"/>
</dbReference>
<dbReference type="Gene3D" id="3.20.20.70">
    <property type="entry name" value="Aldolase class I"/>
    <property type="match status" value="1"/>
</dbReference>
<dbReference type="HAMAP" id="MF_01964">
    <property type="entry name" value="IMPDH"/>
    <property type="match status" value="1"/>
</dbReference>
<dbReference type="InterPro" id="IPR013785">
    <property type="entry name" value="Aldolase_TIM"/>
</dbReference>
<dbReference type="InterPro" id="IPR000644">
    <property type="entry name" value="CBS_dom"/>
</dbReference>
<dbReference type="InterPro" id="IPR046342">
    <property type="entry name" value="CBS_dom_sf"/>
</dbReference>
<dbReference type="InterPro" id="IPR005990">
    <property type="entry name" value="IMP_DH"/>
</dbReference>
<dbReference type="InterPro" id="IPR015875">
    <property type="entry name" value="IMP_DH/GMP_Rdtase_CS"/>
</dbReference>
<dbReference type="InterPro" id="IPR001093">
    <property type="entry name" value="IMP_DH_GMPRt"/>
</dbReference>
<dbReference type="NCBIfam" id="TIGR01302">
    <property type="entry name" value="IMP_dehydrog"/>
    <property type="match status" value="1"/>
</dbReference>
<dbReference type="PANTHER" id="PTHR11911:SF111">
    <property type="entry name" value="INOSINE-5'-MONOPHOSPHATE DEHYDROGENASE"/>
    <property type="match status" value="1"/>
</dbReference>
<dbReference type="PANTHER" id="PTHR11911">
    <property type="entry name" value="INOSINE-5-MONOPHOSPHATE DEHYDROGENASE RELATED"/>
    <property type="match status" value="1"/>
</dbReference>
<dbReference type="Pfam" id="PF00571">
    <property type="entry name" value="CBS"/>
    <property type="match status" value="2"/>
</dbReference>
<dbReference type="Pfam" id="PF00478">
    <property type="entry name" value="IMPDH"/>
    <property type="match status" value="1"/>
</dbReference>
<dbReference type="PIRSF" id="PIRSF000130">
    <property type="entry name" value="IMPDH"/>
    <property type="match status" value="1"/>
</dbReference>
<dbReference type="SMART" id="SM00116">
    <property type="entry name" value="CBS"/>
    <property type="match status" value="2"/>
</dbReference>
<dbReference type="SMART" id="SM01240">
    <property type="entry name" value="IMPDH"/>
    <property type="match status" value="1"/>
</dbReference>
<dbReference type="SUPFAM" id="SSF54631">
    <property type="entry name" value="CBS-domain pair"/>
    <property type="match status" value="1"/>
</dbReference>
<dbReference type="SUPFAM" id="SSF51412">
    <property type="entry name" value="Inosine monophosphate dehydrogenase (IMPDH)"/>
    <property type="match status" value="1"/>
</dbReference>
<dbReference type="PROSITE" id="PS51371">
    <property type="entry name" value="CBS"/>
    <property type="match status" value="2"/>
</dbReference>
<dbReference type="PROSITE" id="PS00487">
    <property type="entry name" value="IMP_DH_GMP_RED"/>
    <property type="match status" value="1"/>
</dbReference>
<comment type="function">
    <text evidence="1">Catalyzes the conversion of inosine 5'-phosphate (IMP) to xanthosine 5'-phosphate (XMP), the first committed and rate-limiting step in the de novo synthesis of guanine nucleotides, and therefore plays an important role in the regulation of cell growth.</text>
</comment>
<comment type="catalytic activity">
    <reaction evidence="1">
        <text>IMP + NAD(+) + H2O = XMP + NADH + H(+)</text>
        <dbReference type="Rhea" id="RHEA:11708"/>
        <dbReference type="ChEBI" id="CHEBI:15377"/>
        <dbReference type="ChEBI" id="CHEBI:15378"/>
        <dbReference type="ChEBI" id="CHEBI:57464"/>
        <dbReference type="ChEBI" id="CHEBI:57540"/>
        <dbReference type="ChEBI" id="CHEBI:57945"/>
        <dbReference type="ChEBI" id="CHEBI:58053"/>
        <dbReference type="EC" id="1.1.1.205"/>
    </reaction>
</comment>
<comment type="cofactor">
    <cofactor evidence="1">
        <name>K(+)</name>
        <dbReference type="ChEBI" id="CHEBI:29103"/>
    </cofactor>
</comment>
<comment type="activity regulation">
    <text evidence="1">Mycophenolic acid (MPA) is a non-competitive inhibitor that prevents formation of the closed enzyme conformation by binding to the same site as the amobile flap. In contrast, mizoribine monophosphate (MZP) is a competitive inhibitor that induces the closed conformation. MPA is a potent inhibitor of mammalian IMPDHs but a poor inhibitor of the bacterial enzymes. MZP is a more potent inhibitor of bacterial IMPDH.</text>
</comment>
<comment type="pathway">
    <text evidence="1">Purine metabolism; XMP biosynthesis via de novo pathway; XMP from IMP: step 1/1.</text>
</comment>
<comment type="subunit">
    <text evidence="1">Homotetramer.</text>
</comment>
<comment type="similarity">
    <text evidence="1">Belongs to the IMPDH/GMPR family.</text>
</comment>
<feature type="chain" id="PRO_0000093701" description="Inosine-5'-monophosphate dehydrogenase">
    <location>
        <begin position="1"/>
        <end position="529"/>
    </location>
</feature>
<feature type="domain" description="CBS 1" evidence="1">
    <location>
        <begin position="129"/>
        <end position="185"/>
    </location>
</feature>
<feature type="domain" description="CBS 2" evidence="1">
    <location>
        <begin position="189"/>
        <end position="246"/>
    </location>
</feature>
<feature type="active site" description="Thioimidate intermediate" evidence="1">
    <location>
        <position position="341"/>
    </location>
</feature>
<feature type="active site" description="Proton acceptor" evidence="1">
    <location>
        <position position="443"/>
    </location>
</feature>
<feature type="binding site" evidence="1">
    <location>
        <position position="283"/>
    </location>
    <ligand>
        <name>NAD(+)</name>
        <dbReference type="ChEBI" id="CHEBI:57540"/>
    </ligand>
</feature>
<feature type="binding site" evidence="1">
    <location>
        <begin position="334"/>
        <end position="336"/>
    </location>
    <ligand>
        <name>NAD(+)</name>
        <dbReference type="ChEBI" id="CHEBI:57540"/>
    </ligand>
</feature>
<feature type="binding site" description="in other chain" evidence="1">
    <location>
        <position position="336"/>
    </location>
    <ligand>
        <name>K(+)</name>
        <dbReference type="ChEBI" id="CHEBI:29103"/>
        <note>ligand shared between two tetrameric partners</note>
    </ligand>
</feature>
<feature type="binding site" description="in other chain" evidence="1">
    <location>
        <position position="338"/>
    </location>
    <ligand>
        <name>K(+)</name>
        <dbReference type="ChEBI" id="CHEBI:29103"/>
        <note>ligand shared between two tetrameric partners</note>
    </ligand>
</feature>
<feature type="binding site" evidence="1">
    <location>
        <position position="339"/>
    </location>
    <ligand>
        <name>IMP</name>
        <dbReference type="ChEBI" id="CHEBI:58053"/>
    </ligand>
</feature>
<feature type="binding site" description="in other chain" evidence="1">
    <location>
        <position position="341"/>
    </location>
    <ligand>
        <name>K(+)</name>
        <dbReference type="ChEBI" id="CHEBI:29103"/>
        <note>ligand shared between two tetrameric partners</note>
    </ligand>
</feature>
<feature type="binding site" evidence="1">
    <location>
        <begin position="374"/>
        <end position="376"/>
    </location>
    <ligand>
        <name>IMP</name>
        <dbReference type="ChEBI" id="CHEBI:58053"/>
    </ligand>
</feature>
<feature type="binding site" evidence="1">
    <location>
        <begin position="397"/>
        <end position="398"/>
    </location>
    <ligand>
        <name>IMP</name>
        <dbReference type="ChEBI" id="CHEBI:58053"/>
    </ligand>
</feature>
<feature type="binding site" evidence="1">
    <location>
        <begin position="421"/>
        <end position="425"/>
    </location>
    <ligand>
        <name>IMP</name>
        <dbReference type="ChEBI" id="CHEBI:58053"/>
    </ligand>
</feature>
<feature type="binding site" evidence="1">
    <location>
        <position position="458"/>
    </location>
    <ligand>
        <name>IMP</name>
        <dbReference type="ChEBI" id="CHEBI:58053"/>
    </ligand>
</feature>
<feature type="binding site" evidence="1">
    <location>
        <position position="511"/>
    </location>
    <ligand>
        <name>K(+)</name>
        <dbReference type="ChEBI" id="CHEBI:29103"/>
        <note>ligand shared between two tetrameric partners</note>
    </ligand>
</feature>
<feature type="binding site" evidence="1">
    <location>
        <position position="512"/>
    </location>
    <ligand>
        <name>K(+)</name>
        <dbReference type="ChEBI" id="CHEBI:29103"/>
        <note>ligand shared between two tetrameric partners</note>
    </ligand>
</feature>
<feature type="binding site" evidence="1">
    <location>
        <position position="513"/>
    </location>
    <ligand>
        <name>K(+)</name>
        <dbReference type="ChEBI" id="CHEBI:29103"/>
        <note>ligand shared between two tetrameric partners</note>
    </ligand>
</feature>